<organism>
    <name type="scientific">Saccharolobus solfataricus (strain ATCC 35092 / DSM 1617 / JCM 11322 / P2)</name>
    <name type="common">Sulfolobus solfataricus</name>
    <dbReference type="NCBI Taxonomy" id="273057"/>
    <lineage>
        <taxon>Archaea</taxon>
        <taxon>Thermoproteota</taxon>
        <taxon>Thermoprotei</taxon>
        <taxon>Sulfolobales</taxon>
        <taxon>Sulfolobaceae</taxon>
        <taxon>Saccharolobus</taxon>
    </lineage>
</organism>
<evidence type="ECO:0000255" key="1">
    <source>
        <dbReference type="HAMAP-Rule" id="MF_00214"/>
    </source>
</evidence>
<name>AROD_SACS2</name>
<protein>
    <recommendedName>
        <fullName evidence="1">3-dehydroquinate dehydratase</fullName>
        <shortName evidence="1">3-dehydroquinase</shortName>
        <ecNumber evidence="1">4.2.1.10</ecNumber>
    </recommendedName>
    <alternativeName>
        <fullName evidence="1">Type I DHQase</fullName>
    </alternativeName>
    <alternativeName>
        <fullName evidence="1">Type I dehydroquinase</fullName>
        <shortName evidence="1">DHQ1</shortName>
    </alternativeName>
</protein>
<feature type="chain" id="PRO_0000138838" description="3-dehydroquinate dehydratase">
    <location>
        <begin position="1"/>
        <end position="220"/>
    </location>
</feature>
<feature type="active site" description="Proton donor/acceptor" evidence="1">
    <location>
        <position position="114"/>
    </location>
</feature>
<feature type="active site" description="Schiff-base intermediate with substrate" evidence="1">
    <location>
        <position position="140"/>
    </location>
</feature>
<feature type="binding site" evidence="1">
    <location>
        <position position="8"/>
    </location>
    <ligand>
        <name>3-dehydroquinate</name>
        <dbReference type="ChEBI" id="CHEBI:32364"/>
    </ligand>
</feature>
<feature type="binding site" evidence="1">
    <location>
        <begin position="30"/>
        <end position="32"/>
    </location>
    <ligand>
        <name>3-dehydroquinate</name>
        <dbReference type="ChEBI" id="CHEBI:32364"/>
    </ligand>
</feature>
<feature type="binding site" evidence="1">
    <location>
        <position position="63"/>
    </location>
    <ligand>
        <name>3-dehydroquinate</name>
        <dbReference type="ChEBI" id="CHEBI:32364"/>
    </ligand>
</feature>
<feature type="binding site" evidence="1">
    <location>
        <position position="174"/>
    </location>
    <ligand>
        <name>3-dehydroquinate</name>
        <dbReference type="ChEBI" id="CHEBI:32364"/>
    </ligand>
</feature>
<feature type="binding site" evidence="1">
    <location>
        <position position="197"/>
    </location>
    <ligand>
        <name>3-dehydroquinate</name>
        <dbReference type="ChEBI" id="CHEBI:32364"/>
    </ligand>
</feature>
<comment type="function">
    <text evidence="1">Involved in the third step of the chorismate pathway, which leads to the biosynthesis of aromatic amino acids. Catalyzes the cis-dehydration of 3-dehydroquinate (DHQ) and introduces the first double bond of the aromatic ring to yield 3-dehydroshikimate.</text>
</comment>
<comment type="catalytic activity">
    <reaction evidence="1">
        <text>3-dehydroquinate = 3-dehydroshikimate + H2O</text>
        <dbReference type="Rhea" id="RHEA:21096"/>
        <dbReference type="ChEBI" id="CHEBI:15377"/>
        <dbReference type="ChEBI" id="CHEBI:16630"/>
        <dbReference type="ChEBI" id="CHEBI:32364"/>
        <dbReference type="EC" id="4.2.1.10"/>
    </reaction>
</comment>
<comment type="pathway">
    <text evidence="1">Metabolic intermediate biosynthesis; chorismate biosynthesis; chorismate from D-erythrose 4-phosphate and phosphoenolpyruvate: step 3/7.</text>
</comment>
<comment type="subunit">
    <text evidence="1">Homodimer.</text>
</comment>
<comment type="similarity">
    <text evidence="1">Belongs to the type-I 3-dehydroquinase family.</text>
</comment>
<sequence length="220" mass="25651">MRPLIVASLPIKKIEDLKLIENFLDADLIELRLDYLREREVSLISDYYEFLDKYKKKLIVTLRDKGEGGINQLADELKIKILNELYERQYLYDIEVSFLQKYDIPYDNRIVSVHYFNYLPTLEKIKEIVSKFSEKAFSVKIAVPSLKGYKEVLLPLLEYENVTVIPMSNNSLERIAVGLLGSKLVYSYAIEPLAQGQLYYKKVIQIFNYINDITTSSLVT</sequence>
<gene>
    <name evidence="1" type="primary">aroD</name>
    <name type="ordered locus">SSO0311</name>
</gene>
<dbReference type="EC" id="4.2.1.10" evidence="1"/>
<dbReference type="EMBL" id="AE006641">
    <property type="protein sequence ID" value="AAK40647.1"/>
    <property type="molecule type" value="Genomic_DNA"/>
</dbReference>
<dbReference type="PIR" id="H90173">
    <property type="entry name" value="H90173"/>
</dbReference>
<dbReference type="RefSeq" id="WP_009990602.1">
    <property type="nucleotide sequence ID" value="NC_002754.1"/>
</dbReference>
<dbReference type="SMR" id="Q980I4"/>
<dbReference type="FunCoup" id="Q980I4">
    <property type="interactions" value="89"/>
</dbReference>
<dbReference type="STRING" id="273057.SSO0311"/>
<dbReference type="PaxDb" id="273057-SSO0311"/>
<dbReference type="EnsemblBacteria" id="AAK40647">
    <property type="protein sequence ID" value="AAK40647"/>
    <property type="gene ID" value="SSO0311"/>
</dbReference>
<dbReference type="KEGG" id="sso:SSO0311"/>
<dbReference type="PATRIC" id="fig|273057.12.peg.303"/>
<dbReference type="eggNOG" id="arCOG02097">
    <property type="taxonomic scope" value="Archaea"/>
</dbReference>
<dbReference type="HOGENOM" id="CLU_064444_2_0_2"/>
<dbReference type="InParanoid" id="Q980I4"/>
<dbReference type="PhylomeDB" id="Q980I4"/>
<dbReference type="UniPathway" id="UPA00053">
    <property type="reaction ID" value="UER00086"/>
</dbReference>
<dbReference type="Proteomes" id="UP000001974">
    <property type="component" value="Chromosome"/>
</dbReference>
<dbReference type="GO" id="GO:0003855">
    <property type="term" value="F:3-dehydroquinate dehydratase activity"/>
    <property type="evidence" value="ECO:0000318"/>
    <property type="project" value="GO_Central"/>
</dbReference>
<dbReference type="GO" id="GO:0046279">
    <property type="term" value="P:3,4-dihydroxybenzoate biosynthetic process"/>
    <property type="evidence" value="ECO:0000318"/>
    <property type="project" value="GO_Central"/>
</dbReference>
<dbReference type="GO" id="GO:0008652">
    <property type="term" value="P:amino acid biosynthetic process"/>
    <property type="evidence" value="ECO:0007669"/>
    <property type="project" value="UniProtKB-KW"/>
</dbReference>
<dbReference type="GO" id="GO:0009073">
    <property type="term" value="P:aromatic amino acid family biosynthetic process"/>
    <property type="evidence" value="ECO:0007669"/>
    <property type="project" value="UniProtKB-KW"/>
</dbReference>
<dbReference type="GO" id="GO:0009423">
    <property type="term" value="P:chorismate biosynthetic process"/>
    <property type="evidence" value="ECO:0007669"/>
    <property type="project" value="UniProtKB-UniRule"/>
</dbReference>
<dbReference type="CDD" id="cd00502">
    <property type="entry name" value="DHQase_I"/>
    <property type="match status" value="1"/>
</dbReference>
<dbReference type="Gene3D" id="3.20.20.70">
    <property type="entry name" value="Aldolase class I"/>
    <property type="match status" value="1"/>
</dbReference>
<dbReference type="HAMAP" id="MF_00214">
    <property type="entry name" value="AroD"/>
    <property type="match status" value="1"/>
</dbReference>
<dbReference type="InterPro" id="IPR013785">
    <property type="entry name" value="Aldolase_TIM"/>
</dbReference>
<dbReference type="InterPro" id="IPR001381">
    <property type="entry name" value="DHquinase_I"/>
</dbReference>
<dbReference type="InterPro" id="IPR050146">
    <property type="entry name" value="Type-I_3-dehydroquinase"/>
</dbReference>
<dbReference type="NCBIfam" id="NF010091">
    <property type="entry name" value="PRK13576.1"/>
    <property type="match status" value="1"/>
</dbReference>
<dbReference type="PANTHER" id="PTHR43699">
    <property type="entry name" value="3-DEHYDROQUINATE DEHYDRATASE"/>
    <property type="match status" value="1"/>
</dbReference>
<dbReference type="PANTHER" id="PTHR43699:SF1">
    <property type="entry name" value="3-DEHYDROQUINATE DEHYDRATASE"/>
    <property type="match status" value="1"/>
</dbReference>
<dbReference type="Pfam" id="PF01487">
    <property type="entry name" value="DHquinase_I"/>
    <property type="match status" value="1"/>
</dbReference>
<dbReference type="SUPFAM" id="SSF51569">
    <property type="entry name" value="Aldolase"/>
    <property type="match status" value="1"/>
</dbReference>
<keyword id="KW-0028">Amino-acid biosynthesis</keyword>
<keyword id="KW-0057">Aromatic amino acid biosynthesis</keyword>
<keyword id="KW-0456">Lyase</keyword>
<keyword id="KW-1185">Reference proteome</keyword>
<keyword id="KW-0704">Schiff base</keyword>
<accession>Q980I4</accession>
<reference key="1">
    <citation type="journal article" date="2001" name="Proc. Natl. Acad. Sci. U.S.A.">
        <title>The complete genome of the crenarchaeon Sulfolobus solfataricus P2.</title>
        <authorList>
            <person name="She Q."/>
            <person name="Singh R.K."/>
            <person name="Confalonieri F."/>
            <person name="Zivanovic Y."/>
            <person name="Allard G."/>
            <person name="Awayez M.J."/>
            <person name="Chan-Weiher C.C.-Y."/>
            <person name="Clausen I.G."/>
            <person name="Curtis B.A."/>
            <person name="De Moors A."/>
            <person name="Erauso G."/>
            <person name="Fletcher C."/>
            <person name="Gordon P.M.K."/>
            <person name="Heikamp-de Jong I."/>
            <person name="Jeffries A.C."/>
            <person name="Kozera C.J."/>
            <person name="Medina N."/>
            <person name="Peng X."/>
            <person name="Thi-Ngoc H.P."/>
            <person name="Redder P."/>
            <person name="Schenk M.E."/>
            <person name="Theriault C."/>
            <person name="Tolstrup N."/>
            <person name="Charlebois R.L."/>
            <person name="Doolittle W.F."/>
            <person name="Duguet M."/>
            <person name="Gaasterland T."/>
            <person name="Garrett R.A."/>
            <person name="Ragan M.A."/>
            <person name="Sensen C.W."/>
            <person name="Van der Oost J."/>
        </authorList>
    </citation>
    <scope>NUCLEOTIDE SEQUENCE [LARGE SCALE GENOMIC DNA]</scope>
    <source>
        <strain>ATCC 35092 / DSM 1617 / JCM 11322 / P2</strain>
    </source>
</reference>
<proteinExistence type="inferred from homology"/>